<comment type="subcellular location">
    <subcellularLocation>
        <location evidence="2">Secreted</location>
    </subcellularLocation>
</comment>
<comment type="developmental stage">
    <text>Accumulates in a sporulation-specific manner during the uredinial stage of the life cycle.</text>
</comment>
<keyword id="KW-0677">Repeat</keyword>
<keyword id="KW-0964">Secreted</keyword>
<keyword id="KW-0732">Signal</keyword>
<organism>
    <name type="scientific">Puccinia graminis</name>
    <name type="common">Black stem rust fungus</name>
    <dbReference type="NCBI Taxonomy" id="5297"/>
    <lineage>
        <taxon>Eukaryota</taxon>
        <taxon>Fungi</taxon>
        <taxon>Dikarya</taxon>
        <taxon>Basidiomycota</taxon>
        <taxon>Pucciniomycotina</taxon>
        <taxon>Pucciniomycetes</taxon>
        <taxon>Pucciniales</taxon>
        <taxon>Pucciniaceae</taxon>
        <taxon>Puccinia</taxon>
    </lineage>
</organism>
<protein>
    <recommendedName>
        <fullName>Protein USP2</fullName>
    </recommendedName>
</protein>
<accession>P36227</accession>
<sequence>MKITMFFAALSAASGVFAAPAQAAAAAKDLSIGAGVGIGIGAGVGSYGYPYGAYPGWRLQLLPLRWLPLRRLPLRIPILPMVNTLCSVACAQNPRPAHLLIIKPLTPEQFLFL</sequence>
<reference key="1">
    <citation type="journal article" date="1993" name="Mol. Plant Microbe Interact.">
        <title>Molecular cloning and analysis of abundant and stage-specific mRNAs from Puccinia graminis.</title>
        <authorList>
            <person name="Liu Z."/>
            <person name="Szabo L.J."/>
            <person name="Bushnell W.R."/>
        </authorList>
    </citation>
    <scope>NUCLEOTIDE SEQUENCE [MRNA]</scope>
    <source>
        <strain>Sp. tritici</strain>
    </source>
</reference>
<name>USP2_PUCGR</name>
<proteinExistence type="evidence at transcript level"/>
<feature type="signal peptide" evidence="1">
    <location>
        <begin position="1"/>
        <end position="18"/>
    </location>
</feature>
<feature type="chain" id="PRO_0000013524" description="Protein USP2">
    <location>
        <begin position="19"/>
        <end position="113"/>
    </location>
</feature>
<feature type="repeat" description="1-1">
    <location>
        <begin position="32"/>
        <end position="37"/>
    </location>
</feature>
<feature type="repeat" description="1-2">
    <location>
        <begin position="40"/>
        <end position="45"/>
    </location>
</feature>
<feature type="repeat" description="2-1">
    <location>
        <begin position="46"/>
        <end position="49"/>
    </location>
</feature>
<feature type="repeat" description="2-2">
    <location>
        <begin position="50"/>
        <end position="53"/>
    </location>
</feature>
<feature type="repeat" description="3-1">
    <location>
        <begin position="59"/>
        <end position="65"/>
    </location>
</feature>
<feature type="repeat" description="3-2">
    <location>
        <begin position="69"/>
        <end position="75"/>
    </location>
</feature>
<feature type="region of interest" description="2 X 6 AA repeats">
    <location>
        <begin position="32"/>
        <end position="45"/>
    </location>
</feature>
<feature type="region of interest" description="2 X 4 AA approximate tandem repeats">
    <location>
        <begin position="46"/>
        <end position="53"/>
    </location>
</feature>
<feature type="region of interest" description="2 X 7 AA approximate repeats">
    <location>
        <begin position="59"/>
        <end position="75"/>
    </location>
</feature>
<feature type="sequence conflict" description="In Ref. 1; AAB47778." evidence="2" ref="1">
    <original>V</original>
    <variation>G</variation>
    <location>
        <position position="36"/>
    </location>
</feature>
<dbReference type="EMBL" id="L08127">
    <property type="protein sequence ID" value="AAB47778.1"/>
    <property type="molecule type" value="mRNA"/>
</dbReference>
<dbReference type="PIR" id="T10469">
    <property type="entry name" value="T10469"/>
</dbReference>
<dbReference type="GO" id="GO:0005576">
    <property type="term" value="C:extracellular region"/>
    <property type="evidence" value="ECO:0007669"/>
    <property type="project" value="UniProtKB-SubCell"/>
</dbReference>
<evidence type="ECO:0000255" key="1"/>
<evidence type="ECO:0000305" key="2"/>
<gene>
    <name type="primary">USP2</name>
</gene>